<gene>
    <name type="primary">luxS</name>
    <name type="ordered locus">SP_0340</name>
</gene>
<dbReference type="EC" id="4.4.1.21"/>
<dbReference type="EMBL" id="AE005672">
    <property type="protein sequence ID" value="AAK74514.1"/>
    <property type="molecule type" value="Genomic_DNA"/>
</dbReference>
<dbReference type="PIR" id="A95040">
    <property type="entry name" value="A95040"/>
</dbReference>
<dbReference type="RefSeq" id="WP_000032550.1">
    <property type="nucleotide sequence ID" value="NZ_CP155539.1"/>
</dbReference>
<dbReference type="SMR" id="P65334"/>
<dbReference type="PaxDb" id="170187-SP_0340"/>
<dbReference type="EnsemblBacteria" id="AAK74514">
    <property type="protein sequence ID" value="AAK74514"/>
    <property type="gene ID" value="SP_0340"/>
</dbReference>
<dbReference type="KEGG" id="spn:SP_0340"/>
<dbReference type="eggNOG" id="COG1854">
    <property type="taxonomic scope" value="Bacteria"/>
</dbReference>
<dbReference type="PhylomeDB" id="P65334"/>
<dbReference type="BioCyc" id="SPNE170187:G1FZB-349-MONOMER"/>
<dbReference type="Proteomes" id="UP000000585">
    <property type="component" value="Chromosome"/>
</dbReference>
<dbReference type="GO" id="GO:0005506">
    <property type="term" value="F:iron ion binding"/>
    <property type="evidence" value="ECO:0007669"/>
    <property type="project" value="InterPro"/>
</dbReference>
<dbReference type="GO" id="GO:0043768">
    <property type="term" value="F:S-ribosylhomocysteine lyase activity"/>
    <property type="evidence" value="ECO:0007669"/>
    <property type="project" value="UniProtKB-UniRule"/>
</dbReference>
<dbReference type="GO" id="GO:0009372">
    <property type="term" value="P:quorum sensing"/>
    <property type="evidence" value="ECO:0007669"/>
    <property type="project" value="UniProtKB-UniRule"/>
</dbReference>
<dbReference type="Gene3D" id="3.30.1360.80">
    <property type="entry name" value="S-ribosylhomocysteinase (LuxS)"/>
    <property type="match status" value="1"/>
</dbReference>
<dbReference type="HAMAP" id="MF_00091">
    <property type="entry name" value="LuxS"/>
    <property type="match status" value="1"/>
</dbReference>
<dbReference type="InterPro" id="IPR037005">
    <property type="entry name" value="LuxS_sf"/>
</dbReference>
<dbReference type="InterPro" id="IPR011249">
    <property type="entry name" value="Metalloenz_LuxS/M16"/>
</dbReference>
<dbReference type="InterPro" id="IPR003815">
    <property type="entry name" value="S-ribosylhomocysteinase"/>
</dbReference>
<dbReference type="NCBIfam" id="NF002607">
    <property type="entry name" value="PRK02260.2-5"/>
    <property type="match status" value="1"/>
</dbReference>
<dbReference type="NCBIfam" id="NF002608">
    <property type="entry name" value="PRK02260.3-1"/>
    <property type="match status" value="1"/>
</dbReference>
<dbReference type="PANTHER" id="PTHR35799">
    <property type="entry name" value="S-RIBOSYLHOMOCYSTEINE LYASE"/>
    <property type="match status" value="1"/>
</dbReference>
<dbReference type="PANTHER" id="PTHR35799:SF1">
    <property type="entry name" value="S-RIBOSYLHOMOCYSTEINE LYASE"/>
    <property type="match status" value="1"/>
</dbReference>
<dbReference type="Pfam" id="PF02664">
    <property type="entry name" value="LuxS"/>
    <property type="match status" value="1"/>
</dbReference>
<dbReference type="PIRSF" id="PIRSF006160">
    <property type="entry name" value="AI2"/>
    <property type="match status" value="1"/>
</dbReference>
<dbReference type="PRINTS" id="PR01487">
    <property type="entry name" value="LUXSPROTEIN"/>
</dbReference>
<dbReference type="SUPFAM" id="SSF63411">
    <property type="entry name" value="LuxS/MPP-like metallohydrolase"/>
    <property type="match status" value="1"/>
</dbReference>
<reference key="1">
    <citation type="journal article" date="2001" name="Science">
        <title>Complete genome sequence of a virulent isolate of Streptococcus pneumoniae.</title>
        <authorList>
            <person name="Tettelin H."/>
            <person name="Nelson K.E."/>
            <person name="Paulsen I.T."/>
            <person name="Eisen J.A."/>
            <person name="Read T.D."/>
            <person name="Peterson S.N."/>
            <person name="Heidelberg J.F."/>
            <person name="DeBoy R.T."/>
            <person name="Haft D.H."/>
            <person name="Dodson R.J."/>
            <person name="Durkin A.S."/>
            <person name="Gwinn M.L."/>
            <person name="Kolonay J.F."/>
            <person name="Nelson W.C."/>
            <person name="Peterson J.D."/>
            <person name="Umayam L.A."/>
            <person name="White O."/>
            <person name="Salzberg S.L."/>
            <person name="Lewis M.R."/>
            <person name="Radune D."/>
            <person name="Holtzapple E.K."/>
            <person name="Khouri H.M."/>
            <person name="Wolf A.M."/>
            <person name="Utterback T.R."/>
            <person name="Hansen C.L."/>
            <person name="McDonald L.A."/>
            <person name="Feldblyum T.V."/>
            <person name="Angiuoli S.V."/>
            <person name="Dickinson T."/>
            <person name="Hickey E.K."/>
            <person name="Holt I.E."/>
            <person name="Loftus B.J."/>
            <person name="Yang F."/>
            <person name="Smith H.O."/>
            <person name="Venter J.C."/>
            <person name="Dougherty B.A."/>
            <person name="Morrison D.A."/>
            <person name="Hollingshead S.K."/>
            <person name="Fraser C.M."/>
        </authorList>
    </citation>
    <scope>NUCLEOTIDE SEQUENCE [LARGE SCALE GENOMIC DNA]</scope>
    <source>
        <strain>ATCC BAA-334 / TIGR4</strain>
    </source>
</reference>
<comment type="function">
    <text evidence="1">Involved in the synthesis of autoinducer 2 (AI-2) which is secreted by bacteria and is used to communicate both the cell density and the metabolic potential of the environment. The regulation of gene expression in response to changes in cell density is called quorum sensing. Catalyzes the transformation of S-ribosylhomocysteine (RHC) to homocysteine (HC) and 4,5-dihydroxy-2,3-pentadione (DPD) (By similarity).</text>
</comment>
<comment type="catalytic activity">
    <reaction>
        <text>S-(5-deoxy-D-ribos-5-yl)-L-homocysteine = (S)-4,5-dihydroxypentane-2,3-dione + L-homocysteine</text>
        <dbReference type="Rhea" id="RHEA:17753"/>
        <dbReference type="ChEBI" id="CHEBI:29484"/>
        <dbReference type="ChEBI" id="CHEBI:58195"/>
        <dbReference type="ChEBI" id="CHEBI:58199"/>
        <dbReference type="EC" id="4.4.1.21"/>
    </reaction>
</comment>
<comment type="cofactor">
    <cofactor evidence="1">
        <name>Fe cation</name>
        <dbReference type="ChEBI" id="CHEBI:24875"/>
    </cofactor>
    <text evidence="1">Binds 1 Fe cation per subunit.</text>
</comment>
<comment type="subunit">
    <text evidence="1">Homodimer.</text>
</comment>
<comment type="similarity">
    <text evidence="2">Belongs to the LuxS family.</text>
</comment>
<evidence type="ECO:0000250" key="1"/>
<evidence type="ECO:0000305" key="2"/>
<protein>
    <recommendedName>
        <fullName>S-ribosylhomocysteine lyase</fullName>
        <ecNumber>4.4.1.21</ecNumber>
    </recommendedName>
    <alternativeName>
        <fullName>AI-2 synthesis protein</fullName>
    </alternativeName>
    <alternativeName>
        <fullName>Autoinducer-2 production protein LuxS</fullName>
    </alternativeName>
</protein>
<name>LUXS_STRPN</name>
<organism>
    <name type="scientific">Streptococcus pneumoniae serotype 4 (strain ATCC BAA-334 / TIGR4)</name>
    <dbReference type="NCBI Taxonomy" id="170187"/>
    <lineage>
        <taxon>Bacteria</taxon>
        <taxon>Bacillati</taxon>
        <taxon>Bacillota</taxon>
        <taxon>Bacilli</taxon>
        <taxon>Lactobacillales</taxon>
        <taxon>Streptococcaceae</taxon>
        <taxon>Streptococcus</taxon>
    </lineage>
</organism>
<feature type="chain" id="PRO_0000172265" description="S-ribosylhomocysteine lyase">
    <location>
        <begin position="1"/>
        <end position="160"/>
    </location>
</feature>
<feature type="binding site" evidence="1">
    <location>
        <position position="57"/>
    </location>
    <ligand>
        <name>Fe cation</name>
        <dbReference type="ChEBI" id="CHEBI:24875"/>
    </ligand>
</feature>
<feature type="binding site" evidence="1">
    <location>
        <position position="61"/>
    </location>
    <ligand>
        <name>Fe cation</name>
        <dbReference type="ChEBI" id="CHEBI:24875"/>
    </ligand>
</feature>
<feature type="binding site" evidence="1">
    <location>
        <position position="127"/>
    </location>
    <ligand>
        <name>Fe cation</name>
        <dbReference type="ChEBI" id="CHEBI:24875"/>
    </ligand>
</feature>
<proteinExistence type="inferred from homology"/>
<keyword id="KW-0071">Autoinducer synthesis</keyword>
<keyword id="KW-0408">Iron</keyword>
<keyword id="KW-0456">Lyase</keyword>
<keyword id="KW-0479">Metal-binding</keyword>
<keyword id="KW-0673">Quorum sensing</keyword>
<keyword id="KW-1185">Reference proteome</keyword>
<sequence length="160" mass="17923">MSKEVIVESFELDHTIVKAPYVRLIGEETGPKGDIISNYDIRLVQPNEDSIPTAGLHTIEHLLAKLIRTRIDGMIDCSPFGCRTGFHMIMWGRHTSAKIAAVIKDSLKEIAETTTWEDVPGTTIESCGNYKDHSLFSAKEWAKLILEQGISDDAFERHVI</sequence>
<accession>P65334</accession>
<accession>Q97SJ9</accession>